<dbReference type="EC" id="1.14.19.2" evidence="2"/>
<dbReference type="EMBL" id="X95988">
    <property type="protein sequence ID" value="CAA65232.1"/>
    <property type="molecule type" value="mRNA"/>
</dbReference>
<dbReference type="PIR" id="T10793">
    <property type="entry name" value="T10793"/>
</dbReference>
<dbReference type="RefSeq" id="NP_001314035.1">
    <property type="nucleotide sequence ID" value="NM_001327106.1"/>
</dbReference>
<dbReference type="SMR" id="Q42770"/>
<dbReference type="STRING" id="3635.Q42770"/>
<dbReference type="PaxDb" id="3635-Q42770"/>
<dbReference type="KEGG" id="ghi:107914399"/>
<dbReference type="UniPathway" id="UPA00199"/>
<dbReference type="Proteomes" id="UP000189702">
    <property type="component" value="Unplaced"/>
</dbReference>
<dbReference type="GO" id="GO:0009507">
    <property type="term" value="C:chloroplast"/>
    <property type="evidence" value="ECO:0007669"/>
    <property type="project" value="UniProtKB-SubCell"/>
</dbReference>
<dbReference type="GO" id="GO:0046872">
    <property type="term" value="F:metal ion binding"/>
    <property type="evidence" value="ECO:0007669"/>
    <property type="project" value="UniProtKB-KW"/>
</dbReference>
<dbReference type="GO" id="GO:0045300">
    <property type="term" value="F:stearoyl-[ACP] desaturase activity"/>
    <property type="evidence" value="ECO:0000318"/>
    <property type="project" value="GO_Central"/>
</dbReference>
<dbReference type="GO" id="GO:0004768">
    <property type="term" value="F:stearoyl-CoA 9-desaturase activity"/>
    <property type="evidence" value="ECO:0000318"/>
    <property type="project" value="GO_Central"/>
</dbReference>
<dbReference type="GO" id="GO:0006952">
    <property type="term" value="P:defense response"/>
    <property type="evidence" value="ECO:0000318"/>
    <property type="project" value="GO_Central"/>
</dbReference>
<dbReference type="GO" id="GO:0006633">
    <property type="term" value="P:fatty acid biosynthetic process"/>
    <property type="evidence" value="ECO:0007669"/>
    <property type="project" value="UniProtKB-KW"/>
</dbReference>
<dbReference type="GO" id="GO:0006631">
    <property type="term" value="P:fatty acid metabolic process"/>
    <property type="evidence" value="ECO:0000318"/>
    <property type="project" value="GO_Central"/>
</dbReference>
<dbReference type="CDD" id="cd01050">
    <property type="entry name" value="Acyl_ACP_Desat"/>
    <property type="match status" value="1"/>
</dbReference>
<dbReference type="FunFam" id="1.10.620.20:FF:000002">
    <property type="entry name" value="Stearoyl-[acyl-carrier-protein] 9-desaturase, chloroplastic"/>
    <property type="match status" value="1"/>
</dbReference>
<dbReference type="Gene3D" id="1.10.620.20">
    <property type="entry name" value="Ribonucleotide Reductase, subunit A"/>
    <property type="match status" value="1"/>
</dbReference>
<dbReference type="InterPro" id="IPR005803">
    <property type="entry name" value="FADS-2_CS"/>
</dbReference>
<dbReference type="InterPro" id="IPR005067">
    <property type="entry name" value="Fatty_acid_desaturase-2"/>
</dbReference>
<dbReference type="InterPro" id="IPR009078">
    <property type="entry name" value="Ferritin-like_SF"/>
</dbReference>
<dbReference type="InterPro" id="IPR012348">
    <property type="entry name" value="RNR-like"/>
</dbReference>
<dbReference type="PANTHER" id="PTHR31155">
    <property type="entry name" value="ACYL- ACYL-CARRIER-PROTEIN DESATURASE-RELATED"/>
    <property type="match status" value="1"/>
</dbReference>
<dbReference type="PANTHER" id="PTHR31155:SF9">
    <property type="entry name" value="STEAROYL-[ACYL-CARRIER-PROTEIN] 9-DESATURASE 7, CHLOROPLASTIC"/>
    <property type="match status" value="1"/>
</dbReference>
<dbReference type="Pfam" id="PF03405">
    <property type="entry name" value="FA_desaturase_2"/>
    <property type="match status" value="1"/>
</dbReference>
<dbReference type="PIRSF" id="PIRSF000346">
    <property type="entry name" value="Dlt9_acylACP_des"/>
    <property type="match status" value="1"/>
</dbReference>
<dbReference type="SUPFAM" id="SSF47240">
    <property type="entry name" value="Ferritin-like"/>
    <property type="match status" value="1"/>
</dbReference>
<dbReference type="PROSITE" id="PS00574">
    <property type="entry name" value="FATTY_ACID_DESATUR_2"/>
    <property type="match status" value="1"/>
</dbReference>
<feature type="transit peptide" description="Chloroplast" evidence="1">
    <location>
        <begin position="1"/>
        <end position="33"/>
    </location>
</feature>
<feature type="chain" id="PRO_0000007132" description="Stearoyl-[acyl-carrier-protein] 9-desaturase, chloroplastic">
    <location>
        <begin position="34"/>
        <end position="397"/>
    </location>
</feature>
<feature type="binding site" evidence="2">
    <location>
        <position position="138"/>
    </location>
    <ligand>
        <name>Fe cation</name>
        <dbReference type="ChEBI" id="CHEBI:24875"/>
        <label>1</label>
    </ligand>
</feature>
<feature type="binding site" evidence="2">
    <location>
        <position position="176"/>
    </location>
    <ligand>
        <name>Fe cation</name>
        <dbReference type="ChEBI" id="CHEBI:24875"/>
        <label>1</label>
    </ligand>
</feature>
<feature type="binding site" evidence="2">
    <location>
        <position position="176"/>
    </location>
    <ligand>
        <name>Fe cation</name>
        <dbReference type="ChEBI" id="CHEBI:24875"/>
        <label>2</label>
    </ligand>
</feature>
<feature type="binding site" evidence="2">
    <location>
        <position position="179"/>
    </location>
    <ligand>
        <name>Fe cation</name>
        <dbReference type="ChEBI" id="CHEBI:24875"/>
        <label>1</label>
    </ligand>
</feature>
<feature type="binding site" evidence="2">
    <location>
        <position position="229"/>
    </location>
    <ligand>
        <name>Fe cation</name>
        <dbReference type="ChEBI" id="CHEBI:24875"/>
        <label>2</label>
    </ligand>
</feature>
<feature type="binding site" evidence="2">
    <location>
        <position position="262"/>
    </location>
    <ligand>
        <name>Fe cation</name>
        <dbReference type="ChEBI" id="CHEBI:24875"/>
        <label>1</label>
    </ligand>
</feature>
<feature type="binding site" evidence="2">
    <location>
        <position position="262"/>
    </location>
    <ligand>
        <name>Fe cation</name>
        <dbReference type="ChEBI" id="CHEBI:24875"/>
        <label>2</label>
    </ligand>
</feature>
<feature type="binding site" evidence="2">
    <location>
        <position position="265"/>
    </location>
    <ligand>
        <name>Fe cation</name>
        <dbReference type="ChEBI" id="CHEBI:24875"/>
        <label>2</label>
    </ligand>
</feature>
<proteinExistence type="evidence at transcript level"/>
<evidence type="ECO:0000250" key="1">
    <source>
        <dbReference type="UniProtKB" id="P22243"/>
    </source>
</evidence>
<evidence type="ECO:0000250" key="2">
    <source>
        <dbReference type="UniProtKB" id="P22337"/>
    </source>
</evidence>
<evidence type="ECO:0000305" key="3"/>
<sequence>MALNFNAIASKSQKLPCFALPPKATLRSPKFSMISTIPSGSKEVGNLKKPFTPPKEVPVQITHSMPPHKIEIFKSLEGWAENNILTHLKPVEKCWQPADFLPDPNSDGFHEQVKELRERAKEIPDDYFVVLVGDMITEEALSTYQTMLNTLDGTRDETGASLTPWAIWTRAWTAEENRHGDLLNKYLYLSGRVDMRQIERTIQYLIGSGMDPHTENSPYRGFIYTSFQERATFISHGNTGRLAKEYGDINLAQICGSIASDEKRHETAYTKIVEKLFEIDPDETVLAFADMMKKKIAMPAEFIYDGRDYNLFDHYSAVAQRIGVYTAKDYVDIVEHLVDRWKVKELAGLSAEGRKAQDYLCSLPSRIRRLEERAQEKAQGSTPVSPFSWIFDREVKL</sequence>
<reference key="1">
    <citation type="online journal article" date="1996" name="Plant Gene Register">
        <title>Nucleotide sequence of a cDNA from Gossypium hirsutum encoding a stearoyl-acyl carrier protein desaturase.</title>
        <authorList>
            <person name="Liu Q."/>
            <person name="Singh S."/>
            <person name="Sharp P."/>
            <person name="Green A."/>
            <person name="Marshall D.R."/>
        </authorList>
        <locator>PGR96-018</locator>
    </citation>
    <scope>NUCLEOTIDE SEQUENCE [MRNA]</scope>
    <source>
        <strain>cv. Deltapine 16</strain>
    </source>
</reference>
<organism>
    <name type="scientific">Gossypium hirsutum</name>
    <name type="common">Upland cotton</name>
    <name type="synonym">Gossypium mexicanum</name>
    <dbReference type="NCBI Taxonomy" id="3635"/>
    <lineage>
        <taxon>Eukaryota</taxon>
        <taxon>Viridiplantae</taxon>
        <taxon>Streptophyta</taxon>
        <taxon>Embryophyta</taxon>
        <taxon>Tracheophyta</taxon>
        <taxon>Spermatophyta</taxon>
        <taxon>Magnoliopsida</taxon>
        <taxon>eudicotyledons</taxon>
        <taxon>Gunneridae</taxon>
        <taxon>Pentapetalae</taxon>
        <taxon>rosids</taxon>
        <taxon>malvids</taxon>
        <taxon>Malvales</taxon>
        <taxon>Malvaceae</taxon>
        <taxon>Malvoideae</taxon>
        <taxon>Gossypium</taxon>
    </lineage>
</organism>
<keyword id="KW-0150">Chloroplast</keyword>
<keyword id="KW-0275">Fatty acid biosynthesis</keyword>
<keyword id="KW-0276">Fatty acid metabolism</keyword>
<keyword id="KW-0408">Iron</keyword>
<keyword id="KW-0444">Lipid biosynthesis</keyword>
<keyword id="KW-0443">Lipid metabolism</keyword>
<keyword id="KW-0479">Metal-binding</keyword>
<keyword id="KW-0560">Oxidoreductase</keyword>
<keyword id="KW-0934">Plastid</keyword>
<keyword id="KW-1185">Reference proteome</keyword>
<keyword id="KW-0809">Transit peptide</keyword>
<protein>
    <recommendedName>
        <fullName>Stearoyl-[acyl-carrier-protein] 9-desaturase, chloroplastic</fullName>
        <shortName>Stearoyl-ACP desaturase</shortName>
        <ecNumber evidence="2">1.14.19.2</ecNumber>
    </recommendedName>
    <alternativeName>
        <fullName>Acyl-[acyl-carrier-protein] desaturase</fullName>
    </alternativeName>
</protein>
<comment type="function">
    <text evidence="2">Converts stearoyl-ACP to oleoyl-ACP by introduction of a cis double bond between carbons 9 and 10 of the acyl chain.</text>
</comment>
<comment type="catalytic activity">
    <reaction evidence="2">
        <text>octadecanoyl-[ACP] + 2 reduced [2Fe-2S]-[ferredoxin] + O2 + 2 H(+) = (9Z)-octadecenoyl-[ACP] + 2 oxidized [2Fe-2S]-[ferredoxin] + 2 H2O</text>
        <dbReference type="Rhea" id="RHEA:11776"/>
        <dbReference type="Rhea" id="RHEA-COMP:9656"/>
        <dbReference type="Rhea" id="RHEA-COMP:9924"/>
        <dbReference type="Rhea" id="RHEA-COMP:10000"/>
        <dbReference type="Rhea" id="RHEA-COMP:10001"/>
        <dbReference type="ChEBI" id="CHEBI:15377"/>
        <dbReference type="ChEBI" id="CHEBI:15378"/>
        <dbReference type="ChEBI" id="CHEBI:15379"/>
        <dbReference type="ChEBI" id="CHEBI:33737"/>
        <dbReference type="ChEBI" id="CHEBI:33738"/>
        <dbReference type="ChEBI" id="CHEBI:78495"/>
        <dbReference type="ChEBI" id="CHEBI:78783"/>
        <dbReference type="EC" id="1.14.19.2"/>
    </reaction>
</comment>
<comment type="cofactor">
    <cofactor evidence="2">
        <name>Fe(2+)</name>
        <dbReference type="ChEBI" id="CHEBI:29033"/>
    </cofactor>
    <text evidence="2">Binds 2 Fe(2+) ions per subunit.</text>
</comment>
<comment type="pathway">
    <text>Lipid metabolism; fatty acid metabolism.</text>
</comment>
<comment type="subunit">
    <text evidence="2">Homodimer.</text>
</comment>
<comment type="subcellular location">
    <subcellularLocation>
        <location evidence="2">Plastid</location>
        <location evidence="2">Chloroplast</location>
    </subcellularLocation>
    <subcellularLocation>
        <location evidence="2">Plastid</location>
    </subcellularLocation>
    <text>In green tissue, found in chloroplasts. In non-photosynthetic tissue, found in plastids.</text>
</comment>
<comment type="similarity">
    <text evidence="3">Belongs to the fatty acid desaturase type 2 family.</text>
</comment>
<name>STAD_GOSHI</name>
<accession>Q42770</accession>